<accession>G3KFL3</accession>
<comment type="function">
    <text evidence="5">Secreted effector involved in P.mirabilis colonization of host plants (Probable). May perturb the signaling of cell death associated with plant immunity, via interaction with a host MAP kinase (Probable).</text>
</comment>
<comment type="subcellular location">
    <subcellularLocation>
        <location evidence="1">Secreted</location>
    </subcellularLocation>
    <subcellularLocation>
        <location evidence="1">Host cytoplasm</location>
    </subcellularLocation>
    <subcellularLocation>
        <location evidence="1">Host nucleus</location>
    </subcellularLocation>
</comment>
<comment type="domain">
    <text evidence="5">The RxLR-dEER motif acts to carry the protein into the host cell cytoplasm through binding to cell surface phosphatidylinositol-3-phosphate.</text>
</comment>
<comment type="domain">
    <text evidence="5">The WY domain contains 3 alpha-helices and is required for the interaction with a host MAP kinase.</text>
</comment>
<comment type="similarity">
    <text evidence="4">Belongs to the RxLR effector family.</text>
</comment>
<dbReference type="EMBL" id="JN208877">
    <property type="protein sequence ID" value="AEO72328.1"/>
    <property type="molecule type" value="Genomic_DNA"/>
</dbReference>
<dbReference type="SMR" id="G3KFL3"/>
<dbReference type="GO" id="GO:0005576">
    <property type="term" value="C:extracellular region"/>
    <property type="evidence" value="ECO:0007669"/>
    <property type="project" value="UniProtKB-SubCell"/>
</dbReference>
<dbReference type="GO" id="GO:0030430">
    <property type="term" value="C:host cell cytoplasm"/>
    <property type="evidence" value="ECO:0007669"/>
    <property type="project" value="UniProtKB-SubCell"/>
</dbReference>
<dbReference type="GO" id="GO:0042025">
    <property type="term" value="C:host cell nucleus"/>
    <property type="evidence" value="ECO:0007669"/>
    <property type="project" value="UniProtKB-SubCell"/>
</dbReference>
<dbReference type="Gene3D" id="1.10.10.2470">
    <property type="match status" value="1"/>
</dbReference>
<dbReference type="InterPro" id="IPR040691">
    <property type="entry name" value="PexRD2_WYL"/>
</dbReference>
<dbReference type="Pfam" id="PF18488">
    <property type="entry name" value="WYL_3"/>
    <property type="match status" value="1"/>
</dbReference>
<keyword id="KW-1035">Host cytoplasm</keyword>
<keyword id="KW-1048">Host nucleus</keyword>
<keyword id="KW-0964">Secreted</keyword>
<keyword id="KW-0732">Signal</keyword>
<feature type="signal peptide" evidence="2">
    <location>
        <begin position="1"/>
        <end position="18"/>
    </location>
</feature>
<feature type="chain" id="PRO_5003446717" description="RxLR effector protein PexRD2">
    <location>
        <begin position="19"/>
        <end position="121"/>
    </location>
</feature>
<feature type="region of interest" description="WY domain" evidence="5">
    <location>
        <begin position="57"/>
        <end position="121"/>
    </location>
</feature>
<feature type="short sequence motif" description="RxLR-dEER" evidence="5">
    <location>
        <begin position="38"/>
        <end position="56"/>
    </location>
</feature>
<gene>
    <name evidence="3" type="primary">PexRD2</name>
</gene>
<organism>
    <name type="scientific">Phytophthora mirabilis</name>
    <dbReference type="NCBI Taxonomy" id="129356"/>
    <lineage>
        <taxon>Eukaryota</taxon>
        <taxon>Sar</taxon>
        <taxon>Stramenopiles</taxon>
        <taxon>Oomycota</taxon>
        <taxon>Peronosporales</taxon>
        <taxon>Peronosporaceae</taxon>
        <taxon>Phytophthora</taxon>
    </lineage>
</organism>
<protein>
    <recommendedName>
        <fullName evidence="3">RxLR effector protein PexRD2</fullName>
    </recommendedName>
</protein>
<name>RD2_PHYMI</name>
<evidence type="ECO:0000250" key="1">
    <source>
        <dbReference type="UniProtKB" id="D0NIN5"/>
    </source>
</evidence>
<evidence type="ECO:0000255" key="2"/>
<evidence type="ECO:0000303" key="3">
    <source>
    </source>
</evidence>
<evidence type="ECO:0000305" key="4"/>
<evidence type="ECO:0000305" key="5">
    <source>
    </source>
</evidence>
<proteinExistence type="inferred from homology"/>
<reference key="1">
    <citation type="journal article" date="2011" name="J. Biol. Chem.">
        <title>Structures of Phytophthora RXLR effector proteins: a conserved but adaptable fold underpins functional diversity.</title>
        <authorList>
            <person name="Boutemy L.S."/>
            <person name="King S.R."/>
            <person name="Win J."/>
            <person name="Hughes R.K."/>
            <person name="Clarke T.A."/>
            <person name="Blumenschein T.M."/>
            <person name="Kamoun S."/>
            <person name="Banfield M.J."/>
        </authorList>
    </citation>
    <scope>NUCLEOTIDE SEQUENCE [GENOMIC DNA]</scope>
    <scope>DOMAIN</scope>
    <source>
        <strain>PIC 99114</strain>
    </source>
</reference>
<sequence>MRLSYVFVVFAASLLVTADTLSTNTGVQAANLVGPAQRLLRKHYTAAENDGDSEARALNPEKMKTMWKAGMTVDGYAAKLKLTDKIAAAANSAKAMEKLGETHKMKKLLRYLNYVAEHTAV</sequence>